<protein>
    <recommendedName>
        <fullName evidence="1">Pantothenate synthetase</fullName>
        <shortName evidence="1">PS</shortName>
        <ecNumber evidence="1">6.3.2.1</ecNumber>
    </recommendedName>
    <alternativeName>
        <fullName evidence="1">Pantoate--beta-alanine ligase</fullName>
    </alternativeName>
    <alternativeName>
        <fullName evidence="1">Pantoate-activating enzyme</fullName>
    </alternativeName>
</protein>
<comment type="function">
    <text evidence="1">Catalyzes the condensation of pantoate with beta-alanine in an ATP-dependent reaction via a pantoyl-adenylate intermediate.</text>
</comment>
<comment type="catalytic activity">
    <reaction evidence="1">
        <text>(R)-pantoate + beta-alanine + ATP = (R)-pantothenate + AMP + diphosphate + H(+)</text>
        <dbReference type="Rhea" id="RHEA:10912"/>
        <dbReference type="ChEBI" id="CHEBI:15378"/>
        <dbReference type="ChEBI" id="CHEBI:15980"/>
        <dbReference type="ChEBI" id="CHEBI:29032"/>
        <dbReference type="ChEBI" id="CHEBI:30616"/>
        <dbReference type="ChEBI" id="CHEBI:33019"/>
        <dbReference type="ChEBI" id="CHEBI:57966"/>
        <dbReference type="ChEBI" id="CHEBI:456215"/>
        <dbReference type="EC" id="6.3.2.1"/>
    </reaction>
</comment>
<comment type="pathway">
    <text evidence="1">Cofactor biosynthesis; (R)-pantothenate biosynthesis; (R)-pantothenate from (R)-pantoate and beta-alanine: step 1/1.</text>
</comment>
<comment type="subunit">
    <text evidence="1">Homodimer.</text>
</comment>
<comment type="subcellular location">
    <subcellularLocation>
        <location evidence="1">Cytoplasm</location>
    </subcellularLocation>
</comment>
<comment type="miscellaneous">
    <text evidence="1">The reaction proceeds by a bi uni uni bi ping pong mechanism.</text>
</comment>
<comment type="similarity">
    <text evidence="1">Belongs to the pantothenate synthetase family.</text>
</comment>
<keyword id="KW-0067">ATP-binding</keyword>
<keyword id="KW-0963">Cytoplasm</keyword>
<keyword id="KW-0436">Ligase</keyword>
<keyword id="KW-0547">Nucleotide-binding</keyword>
<keyword id="KW-0566">Pantothenate biosynthesis</keyword>
<keyword id="KW-1185">Reference proteome</keyword>
<proteinExistence type="inferred from homology"/>
<name>PANC_BACAN</name>
<gene>
    <name evidence="1" type="primary">panC</name>
    <name type="ordered locus">BA_1563</name>
    <name type="ordered locus">GBAA_1563</name>
    <name type="ordered locus">BAS1450</name>
</gene>
<reference key="1">
    <citation type="journal article" date="2003" name="Nature">
        <title>The genome sequence of Bacillus anthracis Ames and comparison to closely related bacteria.</title>
        <authorList>
            <person name="Read T.D."/>
            <person name="Peterson S.N."/>
            <person name="Tourasse N.J."/>
            <person name="Baillie L.W."/>
            <person name="Paulsen I.T."/>
            <person name="Nelson K.E."/>
            <person name="Tettelin H."/>
            <person name="Fouts D.E."/>
            <person name="Eisen J.A."/>
            <person name="Gill S.R."/>
            <person name="Holtzapple E.K."/>
            <person name="Okstad O.A."/>
            <person name="Helgason E."/>
            <person name="Rilstone J."/>
            <person name="Wu M."/>
            <person name="Kolonay J.F."/>
            <person name="Beanan M.J."/>
            <person name="Dodson R.J."/>
            <person name="Brinkac L.M."/>
            <person name="Gwinn M.L."/>
            <person name="DeBoy R.T."/>
            <person name="Madpu R."/>
            <person name="Daugherty S.C."/>
            <person name="Durkin A.S."/>
            <person name="Haft D.H."/>
            <person name="Nelson W.C."/>
            <person name="Peterson J.D."/>
            <person name="Pop M."/>
            <person name="Khouri H.M."/>
            <person name="Radune D."/>
            <person name="Benton J.L."/>
            <person name="Mahamoud Y."/>
            <person name="Jiang L."/>
            <person name="Hance I.R."/>
            <person name="Weidman J.F."/>
            <person name="Berry K.J."/>
            <person name="Plaut R.D."/>
            <person name="Wolf A.M."/>
            <person name="Watkins K.L."/>
            <person name="Nierman W.C."/>
            <person name="Hazen A."/>
            <person name="Cline R.T."/>
            <person name="Redmond C."/>
            <person name="Thwaite J.E."/>
            <person name="White O."/>
            <person name="Salzberg S.L."/>
            <person name="Thomason B."/>
            <person name="Friedlander A.M."/>
            <person name="Koehler T.M."/>
            <person name="Hanna P.C."/>
            <person name="Kolstoe A.-B."/>
            <person name="Fraser C.M."/>
        </authorList>
    </citation>
    <scope>NUCLEOTIDE SEQUENCE [LARGE SCALE GENOMIC DNA]</scope>
    <source>
        <strain>Ames / isolate Porton</strain>
    </source>
</reference>
<reference key="2">
    <citation type="journal article" date="2009" name="J. Bacteriol.">
        <title>The complete genome sequence of Bacillus anthracis Ames 'Ancestor'.</title>
        <authorList>
            <person name="Ravel J."/>
            <person name="Jiang L."/>
            <person name="Stanley S.T."/>
            <person name="Wilson M.R."/>
            <person name="Decker R.S."/>
            <person name="Read T.D."/>
            <person name="Worsham P."/>
            <person name="Keim P.S."/>
            <person name="Salzberg S.L."/>
            <person name="Fraser-Liggett C.M."/>
            <person name="Rasko D.A."/>
        </authorList>
    </citation>
    <scope>NUCLEOTIDE SEQUENCE [LARGE SCALE GENOMIC DNA]</scope>
    <source>
        <strain>Ames ancestor</strain>
    </source>
</reference>
<reference key="3">
    <citation type="submission" date="2004-01" db="EMBL/GenBank/DDBJ databases">
        <title>Complete genome sequence of Bacillus anthracis Sterne.</title>
        <authorList>
            <person name="Brettin T.S."/>
            <person name="Bruce D."/>
            <person name="Challacombe J.F."/>
            <person name="Gilna P."/>
            <person name="Han C."/>
            <person name="Hill K."/>
            <person name="Hitchcock P."/>
            <person name="Jackson P."/>
            <person name="Keim P."/>
            <person name="Longmire J."/>
            <person name="Lucas S."/>
            <person name="Okinaka R."/>
            <person name="Richardson P."/>
            <person name="Rubin E."/>
            <person name="Tice H."/>
        </authorList>
    </citation>
    <scope>NUCLEOTIDE SEQUENCE [LARGE SCALE GENOMIC DNA]</scope>
    <source>
        <strain>Sterne</strain>
    </source>
</reference>
<accession>Q81ST2</accession>
<accession>Q6I112</accession>
<accession>Q6KUW6</accession>
<evidence type="ECO:0000255" key="1">
    <source>
        <dbReference type="HAMAP-Rule" id="MF_00158"/>
    </source>
</evidence>
<feature type="chain" id="PRO_0000128198" description="Pantothenate synthetase">
    <location>
        <begin position="1"/>
        <end position="282"/>
    </location>
</feature>
<feature type="active site" description="Proton donor" evidence="1">
    <location>
        <position position="37"/>
    </location>
</feature>
<feature type="binding site" evidence="1">
    <location>
        <begin position="30"/>
        <end position="37"/>
    </location>
    <ligand>
        <name>ATP</name>
        <dbReference type="ChEBI" id="CHEBI:30616"/>
    </ligand>
</feature>
<feature type="binding site" evidence="1">
    <location>
        <position position="61"/>
    </location>
    <ligand>
        <name>(R)-pantoate</name>
        <dbReference type="ChEBI" id="CHEBI:15980"/>
    </ligand>
</feature>
<feature type="binding site" evidence="1">
    <location>
        <position position="61"/>
    </location>
    <ligand>
        <name>beta-alanine</name>
        <dbReference type="ChEBI" id="CHEBI:57966"/>
    </ligand>
</feature>
<feature type="binding site" evidence="1">
    <location>
        <begin position="147"/>
        <end position="150"/>
    </location>
    <ligand>
        <name>ATP</name>
        <dbReference type="ChEBI" id="CHEBI:30616"/>
    </ligand>
</feature>
<feature type="binding site" evidence="1">
    <location>
        <position position="153"/>
    </location>
    <ligand>
        <name>(R)-pantoate</name>
        <dbReference type="ChEBI" id="CHEBI:15980"/>
    </ligand>
</feature>
<feature type="binding site" evidence="1">
    <location>
        <position position="176"/>
    </location>
    <ligand>
        <name>ATP</name>
        <dbReference type="ChEBI" id="CHEBI:30616"/>
    </ligand>
</feature>
<feature type="binding site" evidence="1">
    <location>
        <begin position="184"/>
        <end position="187"/>
    </location>
    <ligand>
        <name>ATP</name>
        <dbReference type="ChEBI" id="CHEBI:30616"/>
    </ligand>
</feature>
<sequence length="282" mass="31962">MKIVTTVQEMQHITKELRASGKSIGFVPTMGYLHEGHATLLRKAREENEIVVLSVFVNPLQFGPNEDLDRYPRDIDRDENVAKENGVDYLFYPSVEEMYPAEQTTTVEVVKRTDVLCGKQRPGHFAGVATVLMKLFNITLPTRAYFGMKDAQQVAVIEGFVADFNIPVIIVPVDIVREEDGLAKSSRNVYLSQKERKEAPHLYRSLCMAKERIEAGERNAEIITTLVKEYIETYTKGTVDYADLYAYPSLQVVDQIEGRIILAIAVKFENVRLIDNITLTVK</sequence>
<organism>
    <name type="scientific">Bacillus anthracis</name>
    <dbReference type="NCBI Taxonomy" id="1392"/>
    <lineage>
        <taxon>Bacteria</taxon>
        <taxon>Bacillati</taxon>
        <taxon>Bacillota</taxon>
        <taxon>Bacilli</taxon>
        <taxon>Bacillales</taxon>
        <taxon>Bacillaceae</taxon>
        <taxon>Bacillus</taxon>
        <taxon>Bacillus cereus group</taxon>
    </lineage>
</organism>
<dbReference type="EC" id="6.3.2.1" evidence="1"/>
<dbReference type="EMBL" id="AE016879">
    <property type="protein sequence ID" value="AAP25499.1"/>
    <property type="molecule type" value="Genomic_DNA"/>
</dbReference>
<dbReference type="EMBL" id="AE017334">
    <property type="protein sequence ID" value="AAT30660.1"/>
    <property type="molecule type" value="Genomic_DNA"/>
</dbReference>
<dbReference type="EMBL" id="AE017225">
    <property type="protein sequence ID" value="AAT53770.1"/>
    <property type="molecule type" value="Genomic_DNA"/>
</dbReference>
<dbReference type="RefSeq" id="NP_844013.1">
    <property type="nucleotide sequence ID" value="NC_003997.3"/>
</dbReference>
<dbReference type="RefSeq" id="WP_000706998.1">
    <property type="nucleotide sequence ID" value="NZ_WXXJ01000001.1"/>
</dbReference>
<dbReference type="RefSeq" id="YP_027719.1">
    <property type="nucleotide sequence ID" value="NC_005945.1"/>
</dbReference>
<dbReference type="SMR" id="Q81ST2"/>
<dbReference type="STRING" id="261594.GBAA_1563"/>
<dbReference type="DNASU" id="1086855"/>
<dbReference type="GeneID" id="45021535"/>
<dbReference type="KEGG" id="ban:BA_1563"/>
<dbReference type="KEGG" id="bar:GBAA_1563"/>
<dbReference type="KEGG" id="bat:BAS1450"/>
<dbReference type="PATRIC" id="fig|198094.11.peg.1533"/>
<dbReference type="eggNOG" id="COG0414">
    <property type="taxonomic scope" value="Bacteria"/>
</dbReference>
<dbReference type="HOGENOM" id="CLU_047148_0_0_9"/>
<dbReference type="OMA" id="CNHKLEP"/>
<dbReference type="OrthoDB" id="9773087at2"/>
<dbReference type="UniPathway" id="UPA00028">
    <property type="reaction ID" value="UER00005"/>
</dbReference>
<dbReference type="Proteomes" id="UP000000427">
    <property type="component" value="Chromosome"/>
</dbReference>
<dbReference type="Proteomes" id="UP000000594">
    <property type="component" value="Chromosome"/>
</dbReference>
<dbReference type="GO" id="GO:0005829">
    <property type="term" value="C:cytosol"/>
    <property type="evidence" value="ECO:0007669"/>
    <property type="project" value="TreeGrafter"/>
</dbReference>
<dbReference type="GO" id="GO:0005524">
    <property type="term" value="F:ATP binding"/>
    <property type="evidence" value="ECO:0007669"/>
    <property type="project" value="UniProtKB-KW"/>
</dbReference>
<dbReference type="GO" id="GO:0004592">
    <property type="term" value="F:pantoate-beta-alanine ligase activity"/>
    <property type="evidence" value="ECO:0007669"/>
    <property type="project" value="UniProtKB-UniRule"/>
</dbReference>
<dbReference type="GO" id="GO:0015940">
    <property type="term" value="P:pantothenate biosynthetic process"/>
    <property type="evidence" value="ECO:0007669"/>
    <property type="project" value="UniProtKB-UniRule"/>
</dbReference>
<dbReference type="CDD" id="cd00560">
    <property type="entry name" value="PanC"/>
    <property type="match status" value="1"/>
</dbReference>
<dbReference type="FunFam" id="3.30.1300.10:FF:000001">
    <property type="entry name" value="Pantothenate synthetase"/>
    <property type="match status" value="1"/>
</dbReference>
<dbReference type="FunFam" id="3.40.50.620:FF:000013">
    <property type="entry name" value="Pantothenate synthetase"/>
    <property type="match status" value="1"/>
</dbReference>
<dbReference type="Gene3D" id="3.40.50.620">
    <property type="entry name" value="HUPs"/>
    <property type="match status" value="1"/>
</dbReference>
<dbReference type="Gene3D" id="3.30.1300.10">
    <property type="entry name" value="Pantoate-beta-alanine ligase, C-terminal domain"/>
    <property type="match status" value="1"/>
</dbReference>
<dbReference type="HAMAP" id="MF_00158">
    <property type="entry name" value="PanC"/>
    <property type="match status" value="1"/>
</dbReference>
<dbReference type="InterPro" id="IPR004821">
    <property type="entry name" value="Cyt_trans-like"/>
</dbReference>
<dbReference type="InterPro" id="IPR003721">
    <property type="entry name" value="Pantoate_ligase"/>
</dbReference>
<dbReference type="InterPro" id="IPR042176">
    <property type="entry name" value="Pantoate_ligase_C"/>
</dbReference>
<dbReference type="InterPro" id="IPR014729">
    <property type="entry name" value="Rossmann-like_a/b/a_fold"/>
</dbReference>
<dbReference type="NCBIfam" id="TIGR00125">
    <property type="entry name" value="cyt_tran_rel"/>
    <property type="match status" value="1"/>
</dbReference>
<dbReference type="NCBIfam" id="TIGR00018">
    <property type="entry name" value="panC"/>
    <property type="match status" value="1"/>
</dbReference>
<dbReference type="PANTHER" id="PTHR21299">
    <property type="entry name" value="CYTIDYLATE KINASE/PANTOATE-BETA-ALANINE LIGASE"/>
    <property type="match status" value="1"/>
</dbReference>
<dbReference type="PANTHER" id="PTHR21299:SF1">
    <property type="entry name" value="PANTOATE--BETA-ALANINE LIGASE"/>
    <property type="match status" value="1"/>
</dbReference>
<dbReference type="Pfam" id="PF02569">
    <property type="entry name" value="Pantoate_ligase"/>
    <property type="match status" value="1"/>
</dbReference>
<dbReference type="SUPFAM" id="SSF52374">
    <property type="entry name" value="Nucleotidylyl transferase"/>
    <property type="match status" value="1"/>
</dbReference>